<accession>Q5HWB8</accession>
<comment type="function">
    <text evidence="1">The alpha subunit is responsible for the aldol cleavage of indoleglycerol phosphate to indole and glyceraldehyde 3-phosphate.</text>
</comment>
<comment type="catalytic activity">
    <reaction evidence="1">
        <text>(1S,2R)-1-C-(indol-3-yl)glycerol 3-phosphate + L-serine = D-glyceraldehyde 3-phosphate + L-tryptophan + H2O</text>
        <dbReference type="Rhea" id="RHEA:10532"/>
        <dbReference type="ChEBI" id="CHEBI:15377"/>
        <dbReference type="ChEBI" id="CHEBI:33384"/>
        <dbReference type="ChEBI" id="CHEBI:57912"/>
        <dbReference type="ChEBI" id="CHEBI:58866"/>
        <dbReference type="ChEBI" id="CHEBI:59776"/>
        <dbReference type="EC" id="4.2.1.20"/>
    </reaction>
</comment>
<comment type="pathway">
    <text evidence="1">Amino-acid biosynthesis; L-tryptophan biosynthesis; L-tryptophan from chorismate: step 5/5.</text>
</comment>
<comment type="subunit">
    <text evidence="1">Tetramer of two alpha and two beta chains.</text>
</comment>
<comment type="similarity">
    <text evidence="1">Belongs to the TrpA family.</text>
</comment>
<sequence length="249" mass="27967">MVDFRKFYKENANVAYTVLGYPNLQTSEAFLQRLDQSPIDILELGVAYSDPIADGEIIADAAKIALDQGVDIHSVFELLARIKTKKALVFMVYYNLIFSYGLEKFVKKAKSLGICALIVPELSFEESDDLIKECERYNIALITLVSVTTPKERVKKLVKHAKGFIYLLASIGITGTKSVEEAILQDKVKEIRSFTNLPIFVGFGIQNNQDVKRMRKVADGVIVGTSIVKCFKQGNLDIIMKDIEEIFKK</sequence>
<evidence type="ECO:0000255" key="1">
    <source>
        <dbReference type="HAMAP-Rule" id="MF_00131"/>
    </source>
</evidence>
<protein>
    <recommendedName>
        <fullName evidence="1">Tryptophan synthase alpha chain</fullName>
        <ecNumber evidence="1">4.2.1.20</ecNumber>
    </recommendedName>
</protein>
<organism>
    <name type="scientific">Campylobacter jejuni (strain RM1221)</name>
    <dbReference type="NCBI Taxonomy" id="195099"/>
    <lineage>
        <taxon>Bacteria</taxon>
        <taxon>Pseudomonadati</taxon>
        <taxon>Campylobacterota</taxon>
        <taxon>Epsilonproteobacteria</taxon>
        <taxon>Campylobacterales</taxon>
        <taxon>Campylobacteraceae</taxon>
        <taxon>Campylobacter</taxon>
    </lineage>
</organism>
<keyword id="KW-0028">Amino-acid biosynthesis</keyword>
<keyword id="KW-0057">Aromatic amino acid biosynthesis</keyword>
<keyword id="KW-0456">Lyase</keyword>
<keyword id="KW-0822">Tryptophan biosynthesis</keyword>
<dbReference type="EC" id="4.2.1.20" evidence="1"/>
<dbReference type="EMBL" id="CP000025">
    <property type="protein sequence ID" value="AAW34987.1"/>
    <property type="molecule type" value="Genomic_DNA"/>
</dbReference>
<dbReference type="RefSeq" id="WP_002854645.1">
    <property type="nucleotide sequence ID" value="NC_003912.7"/>
</dbReference>
<dbReference type="SMR" id="Q5HWB8"/>
<dbReference type="KEGG" id="cjr:CJE0398"/>
<dbReference type="HOGENOM" id="CLU_016734_0_0_7"/>
<dbReference type="UniPathway" id="UPA00035">
    <property type="reaction ID" value="UER00044"/>
</dbReference>
<dbReference type="GO" id="GO:0005829">
    <property type="term" value="C:cytosol"/>
    <property type="evidence" value="ECO:0007669"/>
    <property type="project" value="TreeGrafter"/>
</dbReference>
<dbReference type="GO" id="GO:0004834">
    <property type="term" value="F:tryptophan synthase activity"/>
    <property type="evidence" value="ECO:0007669"/>
    <property type="project" value="UniProtKB-UniRule"/>
</dbReference>
<dbReference type="CDD" id="cd04724">
    <property type="entry name" value="Tryptophan_synthase_alpha"/>
    <property type="match status" value="1"/>
</dbReference>
<dbReference type="Gene3D" id="3.20.20.70">
    <property type="entry name" value="Aldolase class I"/>
    <property type="match status" value="1"/>
</dbReference>
<dbReference type="HAMAP" id="MF_00131">
    <property type="entry name" value="Trp_synth_alpha"/>
    <property type="match status" value="1"/>
</dbReference>
<dbReference type="InterPro" id="IPR013785">
    <property type="entry name" value="Aldolase_TIM"/>
</dbReference>
<dbReference type="InterPro" id="IPR011060">
    <property type="entry name" value="RibuloseP-bd_barrel"/>
</dbReference>
<dbReference type="InterPro" id="IPR018204">
    <property type="entry name" value="Trp_synthase_alpha_AS"/>
</dbReference>
<dbReference type="InterPro" id="IPR002028">
    <property type="entry name" value="Trp_synthase_suA"/>
</dbReference>
<dbReference type="NCBIfam" id="TIGR00262">
    <property type="entry name" value="trpA"/>
    <property type="match status" value="1"/>
</dbReference>
<dbReference type="PANTHER" id="PTHR43406:SF1">
    <property type="entry name" value="TRYPTOPHAN SYNTHASE ALPHA CHAIN, CHLOROPLASTIC"/>
    <property type="match status" value="1"/>
</dbReference>
<dbReference type="PANTHER" id="PTHR43406">
    <property type="entry name" value="TRYPTOPHAN SYNTHASE, ALPHA CHAIN"/>
    <property type="match status" value="1"/>
</dbReference>
<dbReference type="Pfam" id="PF00290">
    <property type="entry name" value="Trp_syntA"/>
    <property type="match status" value="1"/>
</dbReference>
<dbReference type="SUPFAM" id="SSF51366">
    <property type="entry name" value="Ribulose-phoshate binding barrel"/>
    <property type="match status" value="1"/>
</dbReference>
<dbReference type="PROSITE" id="PS00167">
    <property type="entry name" value="TRP_SYNTHASE_ALPHA"/>
    <property type="match status" value="1"/>
</dbReference>
<name>TRPA_CAMJR</name>
<reference key="1">
    <citation type="journal article" date="2005" name="PLoS Biol.">
        <title>Major structural differences and novel potential virulence mechanisms from the genomes of multiple Campylobacter species.</title>
        <authorList>
            <person name="Fouts D.E."/>
            <person name="Mongodin E.F."/>
            <person name="Mandrell R.E."/>
            <person name="Miller W.G."/>
            <person name="Rasko D.A."/>
            <person name="Ravel J."/>
            <person name="Brinkac L.M."/>
            <person name="DeBoy R.T."/>
            <person name="Parker C.T."/>
            <person name="Daugherty S.C."/>
            <person name="Dodson R.J."/>
            <person name="Durkin A.S."/>
            <person name="Madupu R."/>
            <person name="Sullivan S.A."/>
            <person name="Shetty J.U."/>
            <person name="Ayodeji M.A."/>
            <person name="Shvartsbeyn A."/>
            <person name="Schatz M.C."/>
            <person name="Badger J.H."/>
            <person name="Fraser C.M."/>
            <person name="Nelson K.E."/>
        </authorList>
    </citation>
    <scope>NUCLEOTIDE SEQUENCE [LARGE SCALE GENOMIC DNA]</scope>
    <source>
        <strain>RM1221</strain>
    </source>
</reference>
<proteinExistence type="inferred from homology"/>
<gene>
    <name evidence="1" type="primary">trpA</name>
    <name type="ordered locus">CJE0398</name>
</gene>
<feature type="chain" id="PRO_0000098763" description="Tryptophan synthase alpha chain">
    <location>
        <begin position="1"/>
        <end position="249"/>
    </location>
</feature>
<feature type="active site" description="Proton acceptor" evidence="1">
    <location>
        <position position="43"/>
    </location>
</feature>
<feature type="active site" description="Proton acceptor" evidence="1">
    <location>
        <position position="54"/>
    </location>
</feature>